<gene>
    <name type="primary">Roc1b</name>
    <name type="synonym">ROC2</name>
    <name type="ORF">CG16988</name>
</gene>
<keyword id="KW-0963">Cytoplasm</keyword>
<keyword id="KW-0479">Metal-binding</keyword>
<keyword id="KW-0539">Nucleus</keyword>
<keyword id="KW-1185">Reference proteome</keyword>
<keyword id="KW-0833">Ubl conjugation pathway</keyword>
<keyword id="KW-0862">Zinc</keyword>
<keyword id="KW-0863">Zinc-finger</keyword>
<sequence>MAEEIEVEETEDFHDMDFNDEEPSCSGGAVQARTERFVVKKWVAHAMWGWDVAVDNCAICRNHIMNLCIECQADPNANQDECTVAWGECNHAFHYHCIARWLKTRLVCPLDNKEWVYQKYGR</sequence>
<accession>Q9NHX0</accession>
<accession>Q9W0R1</accession>
<feature type="chain" id="PRO_0000056018" description="RING-box protein 1B">
    <location>
        <begin position="1"/>
        <end position="122"/>
    </location>
</feature>
<feature type="zinc finger region" description="RING-type" evidence="3">
    <location>
        <begin position="57"/>
        <end position="112"/>
    </location>
</feature>
<feature type="region of interest" description="Disordered" evidence="4">
    <location>
        <begin position="1"/>
        <end position="28"/>
    </location>
</feature>
<feature type="compositionally biased region" description="Acidic residues" evidence="4">
    <location>
        <begin position="1"/>
        <end position="23"/>
    </location>
</feature>
<feature type="binding site" evidence="2">
    <location>
        <position position="57"/>
    </location>
    <ligand>
        <name>Zn(2+)</name>
        <dbReference type="ChEBI" id="CHEBI:29105"/>
        <label>1</label>
    </ligand>
</feature>
<feature type="binding site" evidence="2">
    <location>
        <position position="60"/>
    </location>
    <ligand>
        <name>Zn(2+)</name>
        <dbReference type="ChEBI" id="CHEBI:29105"/>
        <label>1</label>
    </ligand>
</feature>
<feature type="binding site" evidence="2">
    <location>
        <position position="68"/>
    </location>
    <ligand>
        <name>Zn(2+)</name>
        <dbReference type="ChEBI" id="CHEBI:29105"/>
        <label>2</label>
    </ligand>
</feature>
<feature type="binding site" evidence="2">
    <location>
        <position position="71"/>
    </location>
    <ligand>
        <name>Zn(2+)</name>
        <dbReference type="ChEBI" id="CHEBI:29105"/>
        <label>2</label>
    </ligand>
</feature>
<feature type="binding site" evidence="2">
    <location>
        <position position="82"/>
    </location>
    <ligand>
        <name>Zn(2+)</name>
        <dbReference type="ChEBI" id="CHEBI:29105"/>
        <label>2</label>
    </ligand>
</feature>
<feature type="binding site" evidence="2">
    <location>
        <position position="89"/>
    </location>
    <ligand>
        <name>Zn(2+)</name>
        <dbReference type="ChEBI" id="CHEBI:29105"/>
        <label>3</label>
    </ligand>
</feature>
<feature type="binding site" evidence="2">
    <location>
        <position position="91"/>
    </location>
    <ligand>
        <name>Zn(2+)</name>
        <dbReference type="ChEBI" id="CHEBI:29105"/>
        <label>3</label>
    </ligand>
</feature>
<feature type="binding site" evidence="2">
    <location>
        <position position="94"/>
    </location>
    <ligand>
        <name>Zn(2+)</name>
        <dbReference type="ChEBI" id="CHEBI:29105"/>
        <label>1</label>
    </ligand>
</feature>
<feature type="binding site" evidence="2">
    <location>
        <position position="96"/>
    </location>
    <ligand>
        <name>Zn(2+)</name>
        <dbReference type="ChEBI" id="CHEBI:29105"/>
        <label>2</label>
    </ligand>
</feature>
<feature type="binding site" evidence="2">
    <location>
        <position position="108"/>
    </location>
    <ligand>
        <name>Zn(2+)</name>
        <dbReference type="ChEBI" id="CHEBI:29105"/>
        <label>3</label>
    </ligand>
</feature>
<feature type="binding site" evidence="2">
    <location>
        <position position="111"/>
    </location>
    <ligand>
        <name>Zn(2+)</name>
        <dbReference type="ChEBI" id="CHEBI:29105"/>
        <label>3</label>
    </ligand>
</feature>
<comment type="function">
    <text evidence="1 5">Component of the SCF (SKP1-CUL1-F-box protein) E3 ubiquitin ligase complex, which mediates the ubiquitination and subsequent proteasomal degradation of target proteins. Through the RING-type zinc finger, seems to recruit the E2 ubiquitination enzyme to the complex and brings it into close proximity to the substrate (By similarity).</text>
</comment>
<comment type="pathway">
    <text>Protein modification; protein ubiquitination.</text>
</comment>
<comment type="subunit">
    <text evidence="1">Part of a SCF complex consisting of Skpa (SKP1), Cul1, Roc1B and a F-box protein.</text>
</comment>
<comment type="subcellular location">
    <subcellularLocation>
        <location>Cytoplasm</location>
    </subcellularLocation>
    <subcellularLocation>
        <location>Nucleus</location>
    </subcellularLocation>
</comment>
<comment type="tissue specificity">
    <text evidence="5">Highly expressed in early embryos, and in pupae. Widely expressed in adult males, while it is weakly expressed in adult females.</text>
</comment>
<comment type="domain">
    <text evidence="1">The RING-type zinc finger domain is essential for ubiquitin ligase activity. It coordinates an additional third zinc ion (By similarity).</text>
</comment>
<comment type="similarity">
    <text evidence="6">Belongs to the RING-box family.</text>
</comment>
<comment type="caution">
    <text evidence="6">It is uncertain whether Met-1 or Met-16 is the initiator.</text>
</comment>
<comment type="sequence caution" evidence="6">
    <conflict type="erroneous initiation">
        <sequence resource="EMBL-CDS" id="AAF32313"/>
    </conflict>
</comment>
<dbReference type="EMBL" id="AF218290">
    <property type="protein sequence ID" value="AAF32313.1"/>
    <property type="status" value="ALT_INIT"/>
    <property type="molecule type" value="Genomic_DNA"/>
</dbReference>
<dbReference type="EMBL" id="AE014296">
    <property type="protein sequence ID" value="AAF47382.1"/>
    <property type="molecule type" value="Genomic_DNA"/>
</dbReference>
<dbReference type="EMBL" id="AY070810">
    <property type="protein sequence ID" value="AAL48432.1"/>
    <property type="molecule type" value="mRNA"/>
</dbReference>
<dbReference type="RefSeq" id="NP_652613.1">
    <property type="nucleotide sequence ID" value="NM_144356.3"/>
</dbReference>
<dbReference type="SMR" id="Q9NHX0"/>
<dbReference type="BioGRID" id="72732">
    <property type="interactions" value="4"/>
</dbReference>
<dbReference type="FunCoup" id="Q9NHX0">
    <property type="interactions" value="397"/>
</dbReference>
<dbReference type="IntAct" id="Q9NHX0">
    <property type="interactions" value="1"/>
</dbReference>
<dbReference type="STRING" id="7227.FBpp0072446"/>
<dbReference type="PaxDb" id="7227-FBpp0072446"/>
<dbReference type="DNASU" id="53445"/>
<dbReference type="EnsemblMetazoa" id="FBtr0072547">
    <property type="protein sequence ID" value="FBpp0072446"/>
    <property type="gene ID" value="FBgn0040291"/>
</dbReference>
<dbReference type="GeneID" id="53445"/>
<dbReference type="KEGG" id="dme:Dmel_CG16988"/>
<dbReference type="UCSC" id="CG16988-RA">
    <property type="organism name" value="d. melanogaster"/>
</dbReference>
<dbReference type="AGR" id="FB:FBgn0040291"/>
<dbReference type="CTD" id="53445"/>
<dbReference type="FlyBase" id="FBgn0040291">
    <property type="gene designation" value="Roc1b"/>
</dbReference>
<dbReference type="VEuPathDB" id="VectorBase:FBgn0040291"/>
<dbReference type="eggNOG" id="KOG2930">
    <property type="taxonomic scope" value="Eukaryota"/>
</dbReference>
<dbReference type="GeneTree" id="ENSGT00940000168153"/>
<dbReference type="HOGENOM" id="CLU_115512_2_1_1"/>
<dbReference type="InParanoid" id="Q9NHX0"/>
<dbReference type="OMA" id="AHALWSW"/>
<dbReference type="OrthoDB" id="8962942at2759"/>
<dbReference type="PhylomeDB" id="Q9NHX0"/>
<dbReference type="Reactome" id="R-DME-216167">
    <property type="pathway name" value="Nuclear CI is degraded"/>
</dbReference>
<dbReference type="SignaLink" id="Q9NHX0"/>
<dbReference type="UniPathway" id="UPA00143"/>
<dbReference type="BioGRID-ORCS" id="53445">
    <property type="hits" value="0 hits in 1 CRISPR screen"/>
</dbReference>
<dbReference type="GenomeRNAi" id="53445"/>
<dbReference type="PRO" id="PR:Q9NHX0"/>
<dbReference type="Proteomes" id="UP000000803">
    <property type="component" value="Chromosome 3L"/>
</dbReference>
<dbReference type="Bgee" id="FBgn0040291">
    <property type="expression patterns" value="Expressed in testis and 10 other cell types or tissues"/>
</dbReference>
<dbReference type="GO" id="GO:0031463">
    <property type="term" value="C:Cul3-RING ubiquitin ligase complex"/>
    <property type="evidence" value="ECO:0000314"/>
    <property type="project" value="FlyBase"/>
</dbReference>
<dbReference type="GO" id="GO:0031461">
    <property type="term" value="C:cullin-RING ubiquitin ligase complex"/>
    <property type="evidence" value="ECO:0000318"/>
    <property type="project" value="GO_Central"/>
</dbReference>
<dbReference type="GO" id="GO:0005737">
    <property type="term" value="C:cytoplasm"/>
    <property type="evidence" value="ECO:0007669"/>
    <property type="project" value="UniProtKB-SubCell"/>
</dbReference>
<dbReference type="GO" id="GO:0005654">
    <property type="term" value="C:nucleoplasm"/>
    <property type="evidence" value="ECO:0000304"/>
    <property type="project" value="Reactome"/>
</dbReference>
<dbReference type="GO" id="GO:0005634">
    <property type="term" value="C:nucleus"/>
    <property type="evidence" value="ECO:0000250"/>
    <property type="project" value="UniProtKB"/>
</dbReference>
<dbReference type="GO" id="GO:0019005">
    <property type="term" value="C:SCF ubiquitin ligase complex"/>
    <property type="evidence" value="ECO:0000250"/>
    <property type="project" value="UniProtKB"/>
</dbReference>
<dbReference type="GO" id="GO:0097602">
    <property type="term" value="F:cullin family protein binding"/>
    <property type="evidence" value="ECO:0000353"/>
    <property type="project" value="FlyBase"/>
</dbReference>
<dbReference type="GO" id="GO:0061663">
    <property type="term" value="F:NEDD8 ligase activity"/>
    <property type="evidence" value="ECO:0000250"/>
    <property type="project" value="FlyBase"/>
</dbReference>
<dbReference type="GO" id="GO:0061630">
    <property type="term" value="F:ubiquitin protein ligase activity"/>
    <property type="evidence" value="ECO:0000314"/>
    <property type="project" value="FlyBase"/>
</dbReference>
<dbReference type="GO" id="GO:0008270">
    <property type="term" value="F:zinc ion binding"/>
    <property type="evidence" value="ECO:0000255"/>
    <property type="project" value="FlyBase"/>
</dbReference>
<dbReference type="GO" id="GO:0008283">
    <property type="term" value="P:cell population proliferation"/>
    <property type="evidence" value="ECO:0000250"/>
    <property type="project" value="UniProtKB"/>
</dbReference>
<dbReference type="GO" id="GO:0019915">
    <property type="term" value="P:lipid storage"/>
    <property type="evidence" value="ECO:0000314"/>
    <property type="project" value="FlyBase"/>
</dbReference>
<dbReference type="GO" id="GO:0045116">
    <property type="term" value="P:protein neddylation"/>
    <property type="evidence" value="ECO:0000250"/>
    <property type="project" value="FlyBase"/>
</dbReference>
<dbReference type="GO" id="GO:0016567">
    <property type="term" value="P:protein ubiquitination"/>
    <property type="evidence" value="ECO:0000314"/>
    <property type="project" value="FlyBase"/>
</dbReference>
<dbReference type="GO" id="GO:0006511">
    <property type="term" value="P:ubiquitin-dependent protein catabolic process"/>
    <property type="evidence" value="ECO:0000318"/>
    <property type="project" value="GO_Central"/>
</dbReference>
<dbReference type="CDD" id="cd16485">
    <property type="entry name" value="mRING-H2-C3H2C2D_RBX1"/>
    <property type="match status" value="1"/>
</dbReference>
<dbReference type="FunFam" id="3.30.40.10:FF:000273">
    <property type="entry name" value="E3 ubiquitin-protein ligase RBX1"/>
    <property type="match status" value="1"/>
</dbReference>
<dbReference type="Gene3D" id="3.30.40.10">
    <property type="entry name" value="Zinc/RING finger domain, C3HC4 (zinc finger)"/>
    <property type="match status" value="1"/>
</dbReference>
<dbReference type="InterPro" id="IPR051031">
    <property type="entry name" value="RING-box_E3_Ubiquitin_Ligase"/>
</dbReference>
<dbReference type="InterPro" id="IPR001841">
    <property type="entry name" value="Znf_RING"/>
</dbReference>
<dbReference type="InterPro" id="IPR013083">
    <property type="entry name" value="Znf_RING/FYVE/PHD"/>
</dbReference>
<dbReference type="InterPro" id="IPR024766">
    <property type="entry name" value="Znf_RING_H2"/>
</dbReference>
<dbReference type="PANTHER" id="PTHR11210">
    <property type="entry name" value="RING BOX"/>
    <property type="match status" value="1"/>
</dbReference>
<dbReference type="Pfam" id="PF12678">
    <property type="entry name" value="zf-rbx1"/>
    <property type="match status" value="1"/>
</dbReference>
<dbReference type="SUPFAM" id="SSF57850">
    <property type="entry name" value="RING/U-box"/>
    <property type="match status" value="1"/>
</dbReference>
<dbReference type="PROSITE" id="PS50089">
    <property type="entry name" value="ZF_RING_2"/>
    <property type="match status" value="1"/>
</dbReference>
<reference key="1">
    <citation type="journal article" date="2002" name="Dev. Cell">
        <title>Drosophila Roc1a encodes a RING-H2 protein with a unique function in processing the Hh signal transducer Ci by the SCF E3 ubiquitin ligase.</title>
        <authorList>
            <person name="Noureddine M.A."/>
            <person name="Donaldson T.D."/>
            <person name="Thacker S.A."/>
            <person name="Duronio R.J."/>
        </authorList>
    </citation>
    <scope>NUCLEOTIDE SEQUENCE</scope>
    <scope>FUNCTION</scope>
    <scope>TISSUE SPECIFICITY</scope>
</reference>
<reference key="2">
    <citation type="journal article" date="2000" name="Science">
        <title>The genome sequence of Drosophila melanogaster.</title>
        <authorList>
            <person name="Adams M.D."/>
            <person name="Celniker S.E."/>
            <person name="Holt R.A."/>
            <person name="Evans C.A."/>
            <person name="Gocayne J.D."/>
            <person name="Amanatides P.G."/>
            <person name="Scherer S.E."/>
            <person name="Li P.W."/>
            <person name="Hoskins R.A."/>
            <person name="Galle R.F."/>
            <person name="George R.A."/>
            <person name="Lewis S.E."/>
            <person name="Richards S."/>
            <person name="Ashburner M."/>
            <person name="Henderson S.N."/>
            <person name="Sutton G.G."/>
            <person name="Wortman J.R."/>
            <person name="Yandell M.D."/>
            <person name="Zhang Q."/>
            <person name="Chen L.X."/>
            <person name="Brandon R.C."/>
            <person name="Rogers Y.-H.C."/>
            <person name="Blazej R.G."/>
            <person name="Champe M."/>
            <person name="Pfeiffer B.D."/>
            <person name="Wan K.H."/>
            <person name="Doyle C."/>
            <person name="Baxter E.G."/>
            <person name="Helt G."/>
            <person name="Nelson C.R."/>
            <person name="Miklos G.L.G."/>
            <person name="Abril J.F."/>
            <person name="Agbayani A."/>
            <person name="An H.-J."/>
            <person name="Andrews-Pfannkoch C."/>
            <person name="Baldwin D."/>
            <person name="Ballew R.M."/>
            <person name="Basu A."/>
            <person name="Baxendale J."/>
            <person name="Bayraktaroglu L."/>
            <person name="Beasley E.M."/>
            <person name="Beeson K.Y."/>
            <person name="Benos P.V."/>
            <person name="Berman B.P."/>
            <person name="Bhandari D."/>
            <person name="Bolshakov S."/>
            <person name="Borkova D."/>
            <person name="Botchan M.R."/>
            <person name="Bouck J."/>
            <person name="Brokstein P."/>
            <person name="Brottier P."/>
            <person name="Burtis K.C."/>
            <person name="Busam D.A."/>
            <person name="Butler H."/>
            <person name="Cadieu E."/>
            <person name="Center A."/>
            <person name="Chandra I."/>
            <person name="Cherry J.M."/>
            <person name="Cawley S."/>
            <person name="Dahlke C."/>
            <person name="Davenport L.B."/>
            <person name="Davies P."/>
            <person name="de Pablos B."/>
            <person name="Delcher A."/>
            <person name="Deng Z."/>
            <person name="Mays A.D."/>
            <person name="Dew I."/>
            <person name="Dietz S.M."/>
            <person name="Dodson K."/>
            <person name="Doup L.E."/>
            <person name="Downes M."/>
            <person name="Dugan-Rocha S."/>
            <person name="Dunkov B.C."/>
            <person name="Dunn P."/>
            <person name="Durbin K.J."/>
            <person name="Evangelista C.C."/>
            <person name="Ferraz C."/>
            <person name="Ferriera S."/>
            <person name="Fleischmann W."/>
            <person name="Fosler C."/>
            <person name="Gabrielian A.E."/>
            <person name="Garg N.S."/>
            <person name="Gelbart W.M."/>
            <person name="Glasser K."/>
            <person name="Glodek A."/>
            <person name="Gong F."/>
            <person name="Gorrell J.H."/>
            <person name="Gu Z."/>
            <person name="Guan P."/>
            <person name="Harris M."/>
            <person name="Harris N.L."/>
            <person name="Harvey D.A."/>
            <person name="Heiman T.J."/>
            <person name="Hernandez J.R."/>
            <person name="Houck J."/>
            <person name="Hostin D."/>
            <person name="Houston K.A."/>
            <person name="Howland T.J."/>
            <person name="Wei M.-H."/>
            <person name="Ibegwam C."/>
            <person name="Jalali M."/>
            <person name="Kalush F."/>
            <person name="Karpen G.H."/>
            <person name="Ke Z."/>
            <person name="Kennison J.A."/>
            <person name="Ketchum K.A."/>
            <person name="Kimmel B.E."/>
            <person name="Kodira C.D."/>
            <person name="Kraft C.L."/>
            <person name="Kravitz S."/>
            <person name="Kulp D."/>
            <person name="Lai Z."/>
            <person name="Lasko P."/>
            <person name="Lei Y."/>
            <person name="Levitsky A.A."/>
            <person name="Li J.H."/>
            <person name="Li Z."/>
            <person name="Liang Y."/>
            <person name="Lin X."/>
            <person name="Liu X."/>
            <person name="Mattei B."/>
            <person name="McIntosh T.C."/>
            <person name="McLeod M.P."/>
            <person name="McPherson D."/>
            <person name="Merkulov G."/>
            <person name="Milshina N.V."/>
            <person name="Mobarry C."/>
            <person name="Morris J."/>
            <person name="Moshrefi A."/>
            <person name="Mount S.M."/>
            <person name="Moy M."/>
            <person name="Murphy B."/>
            <person name="Murphy L."/>
            <person name="Muzny D.M."/>
            <person name="Nelson D.L."/>
            <person name="Nelson D.R."/>
            <person name="Nelson K.A."/>
            <person name="Nixon K."/>
            <person name="Nusskern D.R."/>
            <person name="Pacleb J.M."/>
            <person name="Palazzolo M."/>
            <person name="Pittman G.S."/>
            <person name="Pan S."/>
            <person name="Pollard J."/>
            <person name="Puri V."/>
            <person name="Reese M.G."/>
            <person name="Reinert K."/>
            <person name="Remington K."/>
            <person name="Saunders R.D.C."/>
            <person name="Scheeler F."/>
            <person name="Shen H."/>
            <person name="Shue B.C."/>
            <person name="Siden-Kiamos I."/>
            <person name="Simpson M."/>
            <person name="Skupski M.P."/>
            <person name="Smith T.J."/>
            <person name="Spier E."/>
            <person name="Spradling A.C."/>
            <person name="Stapleton M."/>
            <person name="Strong R."/>
            <person name="Sun E."/>
            <person name="Svirskas R."/>
            <person name="Tector C."/>
            <person name="Turner R."/>
            <person name="Venter E."/>
            <person name="Wang A.H."/>
            <person name="Wang X."/>
            <person name="Wang Z.-Y."/>
            <person name="Wassarman D.A."/>
            <person name="Weinstock G.M."/>
            <person name="Weissenbach J."/>
            <person name="Williams S.M."/>
            <person name="Woodage T."/>
            <person name="Worley K.C."/>
            <person name="Wu D."/>
            <person name="Yang S."/>
            <person name="Yao Q.A."/>
            <person name="Ye J."/>
            <person name="Yeh R.-F."/>
            <person name="Zaveri J.S."/>
            <person name="Zhan M."/>
            <person name="Zhang G."/>
            <person name="Zhao Q."/>
            <person name="Zheng L."/>
            <person name="Zheng X.H."/>
            <person name="Zhong F.N."/>
            <person name="Zhong W."/>
            <person name="Zhou X."/>
            <person name="Zhu S.C."/>
            <person name="Zhu X."/>
            <person name="Smith H.O."/>
            <person name="Gibbs R.A."/>
            <person name="Myers E.W."/>
            <person name="Rubin G.M."/>
            <person name="Venter J.C."/>
        </authorList>
    </citation>
    <scope>NUCLEOTIDE SEQUENCE [LARGE SCALE GENOMIC DNA]</scope>
    <source>
        <strain>Berkeley</strain>
    </source>
</reference>
<reference key="3">
    <citation type="journal article" date="2002" name="Genome Biol.">
        <title>Annotation of the Drosophila melanogaster euchromatic genome: a systematic review.</title>
        <authorList>
            <person name="Misra S."/>
            <person name="Crosby M.A."/>
            <person name="Mungall C.J."/>
            <person name="Matthews B.B."/>
            <person name="Campbell K.S."/>
            <person name="Hradecky P."/>
            <person name="Huang Y."/>
            <person name="Kaminker J.S."/>
            <person name="Millburn G.H."/>
            <person name="Prochnik S.E."/>
            <person name="Smith C.D."/>
            <person name="Tupy J.L."/>
            <person name="Whitfield E.J."/>
            <person name="Bayraktaroglu L."/>
            <person name="Berman B.P."/>
            <person name="Bettencourt B.R."/>
            <person name="Celniker S.E."/>
            <person name="de Grey A.D.N.J."/>
            <person name="Drysdale R.A."/>
            <person name="Harris N.L."/>
            <person name="Richter J."/>
            <person name="Russo S."/>
            <person name="Schroeder A.J."/>
            <person name="Shu S.Q."/>
            <person name="Stapleton M."/>
            <person name="Yamada C."/>
            <person name="Ashburner M."/>
            <person name="Gelbart W.M."/>
            <person name="Rubin G.M."/>
            <person name="Lewis S.E."/>
        </authorList>
    </citation>
    <scope>GENOME REANNOTATION</scope>
    <source>
        <strain>Berkeley</strain>
    </source>
</reference>
<reference key="4">
    <citation type="journal article" date="2002" name="Genome Biol.">
        <title>A Drosophila full-length cDNA resource.</title>
        <authorList>
            <person name="Stapleton M."/>
            <person name="Carlson J.W."/>
            <person name="Brokstein P."/>
            <person name="Yu C."/>
            <person name="Champe M."/>
            <person name="George R.A."/>
            <person name="Guarin H."/>
            <person name="Kronmiller B."/>
            <person name="Pacleb J.M."/>
            <person name="Park S."/>
            <person name="Wan K.H."/>
            <person name="Rubin G.M."/>
            <person name="Celniker S.E."/>
        </authorList>
    </citation>
    <scope>NUCLEOTIDE SEQUENCE [LARGE SCALE MRNA]</scope>
    <source>
        <strain>Berkeley</strain>
        <tissue>Testis</tissue>
    </source>
</reference>
<proteinExistence type="evidence at transcript level"/>
<organism>
    <name type="scientific">Drosophila melanogaster</name>
    <name type="common">Fruit fly</name>
    <dbReference type="NCBI Taxonomy" id="7227"/>
    <lineage>
        <taxon>Eukaryota</taxon>
        <taxon>Metazoa</taxon>
        <taxon>Ecdysozoa</taxon>
        <taxon>Arthropoda</taxon>
        <taxon>Hexapoda</taxon>
        <taxon>Insecta</taxon>
        <taxon>Pterygota</taxon>
        <taxon>Neoptera</taxon>
        <taxon>Endopterygota</taxon>
        <taxon>Diptera</taxon>
        <taxon>Brachycera</taxon>
        <taxon>Muscomorpha</taxon>
        <taxon>Ephydroidea</taxon>
        <taxon>Drosophilidae</taxon>
        <taxon>Drosophila</taxon>
        <taxon>Sophophora</taxon>
    </lineage>
</organism>
<evidence type="ECO:0000250" key="1"/>
<evidence type="ECO:0000250" key="2">
    <source>
        <dbReference type="UniProtKB" id="P62878"/>
    </source>
</evidence>
<evidence type="ECO:0000255" key="3">
    <source>
        <dbReference type="PROSITE-ProRule" id="PRU00175"/>
    </source>
</evidence>
<evidence type="ECO:0000256" key="4">
    <source>
        <dbReference type="SAM" id="MobiDB-lite"/>
    </source>
</evidence>
<evidence type="ECO:0000269" key="5">
    <source>
    </source>
</evidence>
<evidence type="ECO:0000305" key="6"/>
<name>RBX1B_DROME</name>
<protein>
    <recommendedName>
        <fullName>RING-box protein 1B</fullName>
    </recommendedName>
    <alternativeName>
        <fullName>Regulator of cullins 1b</fullName>
    </alternativeName>
</protein>